<dbReference type="EC" id="3.1.1.96" evidence="1"/>
<dbReference type="EMBL" id="CP001147">
    <property type="protein sequence ID" value="ACI20274.1"/>
    <property type="molecule type" value="Genomic_DNA"/>
</dbReference>
<dbReference type="RefSeq" id="WP_012545012.1">
    <property type="nucleotide sequence ID" value="NC_011296.1"/>
</dbReference>
<dbReference type="RefSeq" id="YP_002248304.1">
    <property type="nucleotide sequence ID" value="NC_011296.1"/>
</dbReference>
<dbReference type="SMR" id="B5YJ89"/>
<dbReference type="FunCoup" id="B5YJ89">
    <property type="interactions" value="354"/>
</dbReference>
<dbReference type="STRING" id="289376.THEYE_A0459"/>
<dbReference type="EnsemblBacteria" id="ACI20274">
    <property type="protein sequence ID" value="ACI20274"/>
    <property type="gene ID" value="THEYE_A0459"/>
</dbReference>
<dbReference type="KEGG" id="tye:THEYE_A0459"/>
<dbReference type="PATRIC" id="fig|289376.4.peg.454"/>
<dbReference type="eggNOG" id="COG1490">
    <property type="taxonomic scope" value="Bacteria"/>
</dbReference>
<dbReference type="HOGENOM" id="CLU_076901_1_0_0"/>
<dbReference type="InParanoid" id="B5YJ89"/>
<dbReference type="OrthoDB" id="9801395at2"/>
<dbReference type="Proteomes" id="UP000000718">
    <property type="component" value="Chromosome"/>
</dbReference>
<dbReference type="GO" id="GO:0005737">
    <property type="term" value="C:cytoplasm"/>
    <property type="evidence" value="ECO:0000318"/>
    <property type="project" value="GO_Central"/>
</dbReference>
<dbReference type="GO" id="GO:0051500">
    <property type="term" value="F:D-tyrosyl-tRNA(Tyr) deacylase activity"/>
    <property type="evidence" value="ECO:0000318"/>
    <property type="project" value="GO_Central"/>
</dbReference>
<dbReference type="GO" id="GO:0106026">
    <property type="term" value="F:Gly-tRNA(Ala) deacylase activity"/>
    <property type="evidence" value="ECO:0007669"/>
    <property type="project" value="UniProtKB-UniRule"/>
</dbReference>
<dbReference type="GO" id="GO:0043908">
    <property type="term" value="F:Ser(Gly)-tRNA(Ala) hydrolase activity"/>
    <property type="evidence" value="ECO:0007669"/>
    <property type="project" value="UniProtKB-UniRule"/>
</dbReference>
<dbReference type="GO" id="GO:0000049">
    <property type="term" value="F:tRNA binding"/>
    <property type="evidence" value="ECO:0007669"/>
    <property type="project" value="UniProtKB-UniRule"/>
</dbReference>
<dbReference type="GO" id="GO:0019478">
    <property type="term" value="P:D-amino acid catabolic process"/>
    <property type="evidence" value="ECO:0007669"/>
    <property type="project" value="UniProtKB-UniRule"/>
</dbReference>
<dbReference type="GO" id="GO:0006399">
    <property type="term" value="P:tRNA metabolic process"/>
    <property type="evidence" value="ECO:0000318"/>
    <property type="project" value="GO_Central"/>
</dbReference>
<dbReference type="CDD" id="cd00563">
    <property type="entry name" value="Dtyr_deacylase"/>
    <property type="match status" value="1"/>
</dbReference>
<dbReference type="FunFam" id="3.50.80.10:FF:000001">
    <property type="entry name" value="D-aminoacyl-tRNA deacylase"/>
    <property type="match status" value="1"/>
</dbReference>
<dbReference type="Gene3D" id="3.50.80.10">
    <property type="entry name" value="D-tyrosyl-tRNA(Tyr) deacylase"/>
    <property type="match status" value="1"/>
</dbReference>
<dbReference type="HAMAP" id="MF_00518">
    <property type="entry name" value="Deacylase_Dtd"/>
    <property type="match status" value="1"/>
</dbReference>
<dbReference type="InterPro" id="IPR003732">
    <property type="entry name" value="Daa-tRNA_deacyls_DTD"/>
</dbReference>
<dbReference type="InterPro" id="IPR023509">
    <property type="entry name" value="DTD-like_sf"/>
</dbReference>
<dbReference type="NCBIfam" id="TIGR00256">
    <property type="entry name" value="D-aminoacyl-tRNA deacylase"/>
    <property type="match status" value="1"/>
</dbReference>
<dbReference type="PANTHER" id="PTHR10472:SF5">
    <property type="entry name" value="D-AMINOACYL-TRNA DEACYLASE 1"/>
    <property type="match status" value="1"/>
</dbReference>
<dbReference type="PANTHER" id="PTHR10472">
    <property type="entry name" value="D-TYROSYL-TRNA TYR DEACYLASE"/>
    <property type="match status" value="1"/>
</dbReference>
<dbReference type="Pfam" id="PF02580">
    <property type="entry name" value="Tyr_Deacylase"/>
    <property type="match status" value="1"/>
</dbReference>
<dbReference type="SUPFAM" id="SSF69500">
    <property type="entry name" value="DTD-like"/>
    <property type="match status" value="1"/>
</dbReference>
<keyword id="KW-0963">Cytoplasm</keyword>
<keyword id="KW-0378">Hydrolase</keyword>
<keyword id="KW-1185">Reference proteome</keyword>
<keyword id="KW-0694">RNA-binding</keyword>
<keyword id="KW-0820">tRNA-binding</keyword>
<reference key="1">
    <citation type="submission" date="2008-08" db="EMBL/GenBank/DDBJ databases">
        <title>The complete genome sequence of Thermodesulfovibrio yellowstonii strain ATCC 51303 / DSM 11347 / YP87.</title>
        <authorList>
            <person name="Dodson R.J."/>
            <person name="Durkin A.S."/>
            <person name="Wu M."/>
            <person name="Eisen J."/>
            <person name="Sutton G."/>
        </authorList>
    </citation>
    <scope>NUCLEOTIDE SEQUENCE [LARGE SCALE GENOMIC DNA]</scope>
    <source>
        <strain>ATCC 51303 / DSM 11347 / YP87</strain>
    </source>
</reference>
<comment type="function">
    <text evidence="1">An aminoacyl-tRNA editing enzyme that deacylates mischarged D-aminoacyl-tRNAs. Also deacylates mischarged glycyl-tRNA(Ala), protecting cells against glycine mischarging by AlaRS. Acts via tRNA-based rather than protein-based catalysis; rejects L-amino acids rather than detecting D-amino acids in the active site. By recycling D-aminoacyl-tRNA to D-amino acids and free tRNA molecules, this enzyme counteracts the toxicity associated with the formation of D-aminoacyl-tRNA entities in vivo and helps enforce protein L-homochirality.</text>
</comment>
<comment type="catalytic activity">
    <reaction evidence="1">
        <text>glycyl-tRNA(Ala) + H2O = tRNA(Ala) + glycine + H(+)</text>
        <dbReference type="Rhea" id="RHEA:53744"/>
        <dbReference type="Rhea" id="RHEA-COMP:9657"/>
        <dbReference type="Rhea" id="RHEA-COMP:13640"/>
        <dbReference type="ChEBI" id="CHEBI:15377"/>
        <dbReference type="ChEBI" id="CHEBI:15378"/>
        <dbReference type="ChEBI" id="CHEBI:57305"/>
        <dbReference type="ChEBI" id="CHEBI:78442"/>
        <dbReference type="ChEBI" id="CHEBI:78522"/>
        <dbReference type="EC" id="3.1.1.96"/>
    </reaction>
</comment>
<comment type="catalytic activity">
    <reaction evidence="1">
        <text>a D-aminoacyl-tRNA + H2O = a tRNA + a D-alpha-amino acid + H(+)</text>
        <dbReference type="Rhea" id="RHEA:13953"/>
        <dbReference type="Rhea" id="RHEA-COMP:10123"/>
        <dbReference type="Rhea" id="RHEA-COMP:10124"/>
        <dbReference type="ChEBI" id="CHEBI:15377"/>
        <dbReference type="ChEBI" id="CHEBI:15378"/>
        <dbReference type="ChEBI" id="CHEBI:59871"/>
        <dbReference type="ChEBI" id="CHEBI:78442"/>
        <dbReference type="ChEBI" id="CHEBI:79333"/>
        <dbReference type="EC" id="3.1.1.96"/>
    </reaction>
</comment>
<comment type="subunit">
    <text evidence="1">Homodimer.</text>
</comment>
<comment type="subcellular location">
    <subcellularLocation>
        <location evidence="1">Cytoplasm</location>
    </subcellularLocation>
</comment>
<comment type="domain">
    <text evidence="1">A Gly-cisPro motif from one monomer fits into the active site of the other monomer to allow specific chiral rejection of L-amino acids.</text>
</comment>
<comment type="similarity">
    <text evidence="1">Belongs to the DTD family.</text>
</comment>
<protein>
    <recommendedName>
        <fullName evidence="1">D-aminoacyl-tRNA deacylase</fullName>
        <shortName evidence="1">DTD</shortName>
        <ecNumber evidence="1">3.1.1.96</ecNumber>
    </recommendedName>
    <alternativeName>
        <fullName evidence="1">Gly-tRNA(Ala) deacylase</fullName>
    </alternativeName>
</protein>
<accession>B5YJ89</accession>
<proteinExistence type="inferred from homology"/>
<gene>
    <name evidence="1" type="primary">dtd</name>
    <name type="ordered locus">THEYE_A0459</name>
</gene>
<evidence type="ECO:0000255" key="1">
    <source>
        <dbReference type="HAMAP-Rule" id="MF_00518"/>
    </source>
</evidence>
<organism>
    <name type="scientific">Thermodesulfovibrio yellowstonii (strain ATCC 51303 / DSM 11347 / YP87)</name>
    <dbReference type="NCBI Taxonomy" id="289376"/>
    <lineage>
        <taxon>Bacteria</taxon>
        <taxon>Pseudomonadati</taxon>
        <taxon>Nitrospirota</taxon>
        <taxon>Thermodesulfovibrionia</taxon>
        <taxon>Thermodesulfovibrionales</taxon>
        <taxon>Thermodesulfovibrionaceae</taxon>
        <taxon>Thermodesulfovibrio</taxon>
    </lineage>
</organism>
<name>DTD_THEYD</name>
<feature type="chain" id="PRO_1000127590" description="D-aminoacyl-tRNA deacylase">
    <location>
        <begin position="1"/>
        <end position="146"/>
    </location>
</feature>
<feature type="short sequence motif" description="Gly-cisPro motif, important for rejection of L-amino acids" evidence="1">
    <location>
        <begin position="137"/>
        <end position="138"/>
    </location>
</feature>
<sequence length="146" mass="16252">MIALLQRVNKASVEVGGETISEIGKGILIFLGIDKKDSKKDVEYLADKVVNLRIFEDNNSKMNLSIKDVGGEIMVVSEFTLAGDCKKGNRPSFDKAMPPEEAEKLYRDFIDSLRSKGIPVKEGVFRSFMHVSLINEGPVTFILNTR</sequence>